<protein>
    <recommendedName>
        <fullName evidence="7">ABC multidrug transporter AFR2</fullName>
    </recommendedName>
</protein>
<name>AFR2_CRYNH</name>
<accession>J9VPA2</accession>
<evidence type="ECO:0000255" key="1"/>
<evidence type="ECO:0000255" key="2">
    <source>
        <dbReference type="PROSITE-ProRule" id="PRU00434"/>
    </source>
</evidence>
<evidence type="ECO:0000255" key="3">
    <source>
        <dbReference type="PROSITE-ProRule" id="PRU00498"/>
    </source>
</evidence>
<evidence type="ECO:0000256" key="4">
    <source>
        <dbReference type="SAM" id="MobiDB-lite"/>
    </source>
</evidence>
<evidence type="ECO:0000269" key="5">
    <source>
    </source>
</evidence>
<evidence type="ECO:0000269" key="6">
    <source>
    </source>
</evidence>
<evidence type="ECO:0000303" key="7">
    <source>
    </source>
</evidence>
<evidence type="ECO:0000305" key="8"/>
<organism>
    <name type="scientific">Cryptococcus neoformans var. grubii serotype A (strain H99 / ATCC 208821 / CBS 10515 / FGSC 9487)</name>
    <name type="common">Filobasidiella neoformans var. grubii</name>
    <dbReference type="NCBI Taxonomy" id="235443"/>
    <lineage>
        <taxon>Eukaryota</taxon>
        <taxon>Fungi</taxon>
        <taxon>Dikarya</taxon>
        <taxon>Basidiomycota</taxon>
        <taxon>Agaricomycotina</taxon>
        <taxon>Tremellomycetes</taxon>
        <taxon>Tremellales</taxon>
        <taxon>Cryptococcaceae</taxon>
        <taxon>Cryptococcus</taxon>
        <taxon>Cryptococcus neoformans species complex</taxon>
    </lineage>
</organism>
<dbReference type="EMBL" id="CP003824">
    <property type="protein sequence ID" value="AFR95261.1"/>
    <property type="molecule type" value="Genomic_DNA"/>
</dbReference>
<dbReference type="RefSeq" id="XP_012049160.1">
    <property type="nucleotide sequence ID" value="XM_012193770.1"/>
</dbReference>
<dbReference type="SMR" id="J9VPA2"/>
<dbReference type="GlyCosmos" id="J9VPA2">
    <property type="glycosylation" value="4 sites, No reported glycans"/>
</dbReference>
<dbReference type="GeneID" id="23884643"/>
<dbReference type="KEGG" id="cng:CNAG_00869"/>
<dbReference type="VEuPathDB" id="FungiDB:CNAG_00869"/>
<dbReference type="HOGENOM" id="CLU_000604_35_0_1"/>
<dbReference type="OrthoDB" id="3280at5206"/>
<dbReference type="Proteomes" id="UP000010091">
    <property type="component" value="Chromosome 5"/>
</dbReference>
<dbReference type="GO" id="GO:0005886">
    <property type="term" value="C:plasma membrane"/>
    <property type="evidence" value="ECO:0007669"/>
    <property type="project" value="UniProtKB-SubCell"/>
</dbReference>
<dbReference type="GO" id="GO:0140359">
    <property type="term" value="F:ABC-type transporter activity"/>
    <property type="evidence" value="ECO:0007669"/>
    <property type="project" value="InterPro"/>
</dbReference>
<dbReference type="GO" id="GO:0005524">
    <property type="term" value="F:ATP binding"/>
    <property type="evidence" value="ECO:0007669"/>
    <property type="project" value="UniProtKB-KW"/>
</dbReference>
<dbReference type="GO" id="GO:0016887">
    <property type="term" value="F:ATP hydrolysis activity"/>
    <property type="evidence" value="ECO:0007669"/>
    <property type="project" value="InterPro"/>
</dbReference>
<dbReference type="CDD" id="cd03233">
    <property type="entry name" value="ABCG_PDR_domain1"/>
    <property type="match status" value="1"/>
</dbReference>
<dbReference type="CDD" id="cd03232">
    <property type="entry name" value="ABCG_PDR_domain2"/>
    <property type="match status" value="1"/>
</dbReference>
<dbReference type="FunFam" id="3.40.50.300:FF:000054">
    <property type="entry name" value="ABC multidrug transporter atrF"/>
    <property type="match status" value="1"/>
</dbReference>
<dbReference type="Gene3D" id="3.40.50.300">
    <property type="entry name" value="P-loop containing nucleotide triphosphate hydrolases"/>
    <property type="match status" value="2"/>
</dbReference>
<dbReference type="InterPro" id="IPR003593">
    <property type="entry name" value="AAA+_ATPase"/>
</dbReference>
<dbReference type="InterPro" id="IPR013525">
    <property type="entry name" value="ABC2_TM"/>
</dbReference>
<dbReference type="InterPro" id="IPR029481">
    <property type="entry name" value="ABC_trans_N"/>
</dbReference>
<dbReference type="InterPro" id="IPR003439">
    <property type="entry name" value="ABC_transporter-like_ATP-bd"/>
</dbReference>
<dbReference type="InterPro" id="IPR017871">
    <property type="entry name" value="ABC_transporter-like_CS"/>
</dbReference>
<dbReference type="InterPro" id="IPR034001">
    <property type="entry name" value="ABCG_PDR_1"/>
</dbReference>
<dbReference type="InterPro" id="IPR034003">
    <property type="entry name" value="ABCG_PDR_2"/>
</dbReference>
<dbReference type="InterPro" id="IPR027417">
    <property type="entry name" value="P-loop_NTPase"/>
</dbReference>
<dbReference type="InterPro" id="IPR010929">
    <property type="entry name" value="PDR_CDR_ABC"/>
</dbReference>
<dbReference type="PANTHER" id="PTHR19241">
    <property type="entry name" value="ATP-BINDING CASSETTE TRANSPORTER"/>
    <property type="match status" value="1"/>
</dbReference>
<dbReference type="Pfam" id="PF01061">
    <property type="entry name" value="ABC2_membrane"/>
    <property type="match status" value="2"/>
</dbReference>
<dbReference type="Pfam" id="PF00005">
    <property type="entry name" value="ABC_tran"/>
    <property type="match status" value="2"/>
</dbReference>
<dbReference type="Pfam" id="PF14510">
    <property type="entry name" value="ABC_trans_N"/>
    <property type="match status" value="1"/>
</dbReference>
<dbReference type="Pfam" id="PF06422">
    <property type="entry name" value="PDR_CDR"/>
    <property type="match status" value="1"/>
</dbReference>
<dbReference type="SMART" id="SM00382">
    <property type="entry name" value="AAA"/>
    <property type="match status" value="2"/>
</dbReference>
<dbReference type="SUPFAM" id="SSF52540">
    <property type="entry name" value="P-loop containing nucleoside triphosphate hydrolases"/>
    <property type="match status" value="2"/>
</dbReference>
<dbReference type="PROSITE" id="PS00211">
    <property type="entry name" value="ABC_TRANSPORTER_1"/>
    <property type="match status" value="1"/>
</dbReference>
<dbReference type="PROSITE" id="PS50893">
    <property type="entry name" value="ABC_TRANSPORTER_2"/>
    <property type="match status" value="2"/>
</dbReference>
<keyword id="KW-0067">ATP-binding</keyword>
<keyword id="KW-1003">Cell membrane</keyword>
<keyword id="KW-0325">Glycoprotein</keyword>
<keyword id="KW-0472">Membrane</keyword>
<keyword id="KW-0547">Nucleotide-binding</keyword>
<keyword id="KW-0677">Repeat</keyword>
<keyword id="KW-0812">Transmembrane</keyword>
<keyword id="KW-1133">Transmembrane helix</keyword>
<keyword id="KW-0813">Transport</keyword>
<feature type="chain" id="PRO_0000452664" description="ABC multidrug transporter AFR2">
    <location>
        <begin position="1"/>
        <end position="1529"/>
    </location>
</feature>
<feature type="transmembrane region" description="Helical" evidence="1">
    <location>
        <begin position="505"/>
        <end position="525"/>
    </location>
</feature>
<feature type="transmembrane region" description="Helical" evidence="1">
    <location>
        <begin position="539"/>
        <end position="559"/>
    </location>
</feature>
<feature type="transmembrane region" description="Helical" evidence="1">
    <location>
        <begin position="589"/>
        <end position="609"/>
    </location>
</feature>
<feature type="transmembrane region" description="Helical" evidence="1">
    <location>
        <begin position="614"/>
        <end position="634"/>
    </location>
</feature>
<feature type="transmembrane region" description="Helical" evidence="1">
    <location>
        <begin position="648"/>
        <end position="668"/>
    </location>
</feature>
<feature type="transmembrane region" description="Helical" evidence="1">
    <location>
        <begin position="757"/>
        <end position="777"/>
    </location>
</feature>
<feature type="transmembrane region" description="Helical" evidence="1">
    <location>
        <begin position="1193"/>
        <end position="1213"/>
    </location>
</feature>
<feature type="transmembrane region" description="Helical" evidence="1">
    <location>
        <begin position="1227"/>
        <end position="1247"/>
    </location>
</feature>
<feature type="transmembrane region" description="Helical" evidence="1">
    <location>
        <begin position="1268"/>
        <end position="1288"/>
    </location>
</feature>
<feature type="transmembrane region" description="Helical" evidence="1">
    <location>
        <begin position="1314"/>
        <end position="1334"/>
    </location>
</feature>
<feature type="transmembrane region" description="Helical" evidence="1">
    <location>
        <begin position="1353"/>
        <end position="1373"/>
    </location>
</feature>
<feature type="transmembrane region" description="Helical" evidence="1">
    <location>
        <begin position="1465"/>
        <end position="1485"/>
    </location>
</feature>
<feature type="domain" description="ABC transporter 1" evidence="2">
    <location>
        <begin position="144"/>
        <end position="394"/>
    </location>
</feature>
<feature type="domain" description="ABC transporter 2" evidence="2">
    <location>
        <begin position="845"/>
        <end position="1087"/>
    </location>
</feature>
<feature type="region of interest" description="Disordered" evidence="4">
    <location>
        <begin position="1"/>
        <end position="21"/>
    </location>
</feature>
<feature type="region of interest" description="Disordered" evidence="4">
    <location>
        <begin position="1493"/>
        <end position="1529"/>
    </location>
</feature>
<feature type="compositionally biased region" description="Gly residues" evidence="4">
    <location>
        <begin position="1"/>
        <end position="10"/>
    </location>
</feature>
<feature type="binding site" evidence="2">
    <location>
        <begin position="881"/>
        <end position="888"/>
    </location>
    <ligand>
        <name>ATP</name>
        <dbReference type="ChEBI" id="CHEBI:30616"/>
    </ligand>
</feature>
<feature type="glycosylation site" description="N-linked (GlcNAc...) asparagine" evidence="3">
    <location>
        <position position="235"/>
    </location>
</feature>
<feature type="glycosylation site" description="N-linked (GlcNAc...) asparagine" evidence="3">
    <location>
        <position position="318"/>
    </location>
</feature>
<feature type="glycosylation site" description="N-linked (GlcNAc...) asparagine" evidence="3">
    <location>
        <position position="742"/>
    </location>
</feature>
<feature type="glycosylation site" description="N-linked (GlcNAc...) asparagine" evidence="3">
    <location>
        <position position="1434"/>
    </location>
</feature>
<reference key="1">
    <citation type="journal article" date="2014" name="PLoS Genet.">
        <title>Analysis of the genome and transcriptome of Cryptococcus neoformans var. grubii reveals complex RNA expression and microevolution leading to virulence attenuation.</title>
        <authorList>
            <person name="Janbon G."/>
            <person name="Ormerod K.L."/>
            <person name="Paulet D."/>
            <person name="Byrnes E.J. III"/>
            <person name="Yadav V."/>
            <person name="Chatterjee G."/>
            <person name="Mullapudi N."/>
            <person name="Hon C.-C."/>
            <person name="Billmyre R.B."/>
            <person name="Brunel F."/>
            <person name="Bahn Y.-S."/>
            <person name="Chen W."/>
            <person name="Chen Y."/>
            <person name="Chow E.W.L."/>
            <person name="Coppee J.-Y."/>
            <person name="Floyd-Averette A."/>
            <person name="Gaillardin C."/>
            <person name="Gerik K.J."/>
            <person name="Goldberg J."/>
            <person name="Gonzalez-Hilarion S."/>
            <person name="Gujja S."/>
            <person name="Hamlin J.L."/>
            <person name="Hsueh Y.-P."/>
            <person name="Ianiri G."/>
            <person name="Jones S."/>
            <person name="Kodira C.D."/>
            <person name="Kozubowski L."/>
            <person name="Lam W."/>
            <person name="Marra M."/>
            <person name="Mesner L.D."/>
            <person name="Mieczkowski P.A."/>
            <person name="Moyrand F."/>
            <person name="Nielsen K."/>
            <person name="Proux C."/>
            <person name="Rossignol T."/>
            <person name="Schein J.E."/>
            <person name="Sun S."/>
            <person name="Wollschlaeger C."/>
            <person name="Wood I.A."/>
            <person name="Zeng Q."/>
            <person name="Neuveglise C."/>
            <person name="Newlon C.S."/>
            <person name="Perfect J.R."/>
            <person name="Lodge J.K."/>
            <person name="Idnurm A."/>
            <person name="Stajich J.E."/>
            <person name="Kronstad J.W."/>
            <person name="Sanyal K."/>
            <person name="Heitman J."/>
            <person name="Fraser J.A."/>
            <person name="Cuomo C.A."/>
            <person name="Dietrich F.S."/>
        </authorList>
    </citation>
    <scope>NUCLEOTIDE SEQUENCE [LARGE SCALE GENOMIC DNA]</scope>
    <source>
        <strain>H99 / ATCC 208821 / CBS 10515 / FGSC 9487</strain>
    </source>
</reference>
<reference key="2">
    <citation type="journal article" date="2015" name="J. Antimicrob. Chemother.">
        <title>Identification and properties of plasma membrane azole efflux pumps from the pathogenic fungi Cryptococcus gattii and Cryptococcus neoformans.</title>
        <authorList>
            <person name="Basso L.R. Jr."/>
            <person name="Gast C.E."/>
            <person name="Bruzual I."/>
            <person name="Wong B."/>
        </authorList>
    </citation>
    <scope>FUNCTION</scope>
    <scope>CATALYTIC ACTIVITY</scope>
    <scope>SUBSTRATE SPECIFICITY</scope>
    <scope>BIOPHYSICOCHEMICAL PROPERTIES</scope>
    <scope>SUBCELLULAR LOCATION</scope>
</reference>
<reference key="3">
    <citation type="journal article" date="2018" name="Antimicrob. Agents Chemother.">
        <title>Roles of three Cryptococcus neoformans and Cryptococcus gattii efflux pump-coding genes in response to drug treatment.</title>
        <authorList>
            <person name="Chang M."/>
            <person name="Sionov E."/>
            <person name="Khanal Lamichhane A."/>
            <person name="Kwon-Chung K.J."/>
            <person name="Chang Y.C."/>
        </authorList>
    </citation>
    <scope>FUNCTION</scope>
    <scope>DISRUPTION PHENOTYPE</scope>
    <scope>INDUCTION</scope>
</reference>
<proteinExistence type="evidence at protein level"/>
<comment type="function">
    <text evidence="5 6">Pleiotropic ABC efflux transporter that confers resistance to structurally and functionally unrelated compounds including azoles such as fluconazole (FLC), itraconazole (ITC), posaconazole (POS), and voriconazole (VRC).</text>
</comment>
<comment type="catalytic activity">
    <reaction evidence="5">
        <text>itraconazole(in) + ATP + H2O = itraconazole(out) + ADP + phosphate + H(+)</text>
        <dbReference type="Rhea" id="RHEA:33503"/>
        <dbReference type="ChEBI" id="CHEBI:6076"/>
        <dbReference type="ChEBI" id="CHEBI:15377"/>
        <dbReference type="ChEBI" id="CHEBI:15378"/>
        <dbReference type="ChEBI" id="CHEBI:30616"/>
        <dbReference type="ChEBI" id="CHEBI:43474"/>
        <dbReference type="ChEBI" id="CHEBI:456216"/>
    </reaction>
    <physiologicalReaction direction="left-to-right" evidence="5">
        <dbReference type="Rhea" id="RHEA:33504"/>
    </physiologicalReaction>
</comment>
<comment type="catalytic activity">
    <reaction evidence="5">
        <text>voriconazole(in) + ATP + H2O = voriconazole(out) + ADP + phosphate + H(+)</text>
        <dbReference type="Rhea" id="RHEA:61912"/>
        <dbReference type="ChEBI" id="CHEBI:10023"/>
        <dbReference type="ChEBI" id="CHEBI:15377"/>
        <dbReference type="ChEBI" id="CHEBI:15378"/>
        <dbReference type="ChEBI" id="CHEBI:30616"/>
        <dbReference type="ChEBI" id="CHEBI:43474"/>
        <dbReference type="ChEBI" id="CHEBI:456216"/>
    </reaction>
    <physiologicalReaction direction="left-to-right" evidence="5">
        <dbReference type="Rhea" id="RHEA:61913"/>
    </physiologicalReaction>
</comment>
<comment type="catalytic activity">
    <reaction evidence="5">
        <text>fluconazole(in) + ATP + H2O = fluconazole(out) + ADP + phosphate + H(+)</text>
        <dbReference type="Rhea" id="RHEA:61916"/>
        <dbReference type="ChEBI" id="CHEBI:15377"/>
        <dbReference type="ChEBI" id="CHEBI:15378"/>
        <dbReference type="ChEBI" id="CHEBI:30616"/>
        <dbReference type="ChEBI" id="CHEBI:43474"/>
        <dbReference type="ChEBI" id="CHEBI:46081"/>
        <dbReference type="ChEBI" id="CHEBI:456216"/>
    </reaction>
    <physiologicalReaction direction="left-to-right" evidence="5">
        <dbReference type="Rhea" id="RHEA:61917"/>
    </physiologicalReaction>
</comment>
<comment type="biophysicochemical properties">
    <kinetics>
        <KM evidence="5">0.13 uM for fluconazole transport</KM>
        <Vmax evidence="5">2.6 pmol/min/mg enzyme for fluconazole transport</Vmax>
    </kinetics>
</comment>
<comment type="subcellular location">
    <subcellularLocation>
        <location evidence="5">Cell membrane</location>
        <topology evidence="1">Multi-pass membrane protein</topology>
    </subcellularLocation>
</comment>
<comment type="induction">
    <text evidence="6">Expression is induced in the presence of fluconazole (FLC).</text>
</comment>
<comment type="disruption phenotype">
    <text evidence="6">Does not affect the susceptibility to azoles (PubMed:29378705). Causes further increase in susceptibility toward fluconazole and itraconazole, when AFR1 and MDR1 are also deleted (PubMed:29378705).</text>
</comment>
<comment type="similarity">
    <text evidence="8">Belongs to the ABC transporter superfamily. ABCG family. PDR (TC 3.A.1.205) subfamily.</text>
</comment>
<gene>
    <name evidence="7" type="primary">AFR2</name>
    <name type="ORF">CNAG_00869</name>
</gene>
<sequence>MAFAGVGQGLGTYDRTEQTSGASLGRVASRAHFTDTHPSDDLPAQTEEHRAREVGHLARQLTRQSVGGTDDSSALFSYQQGSDLDPFSDKFCARRWTKLMFEALQTSGPARKAGLSFRNLDVHGFGSDADYQKTVGNLPLVGIGALRDLISNRKRKVQILNSMDGVLEAGEMLVVLGPPGSGCTTMLKTIAGEMNGIYLDESSSLNYRGITPKQIYGQFRGEAIYTAEVDVHFPNLTVGQTLSFAAEARAPRNPPGGISKKEYAKHMRDVVMSVFGISHTLNTIVGNDFIRGVSGGERKRVTIAEASLAGAPLQCWDNSTRGLDSANAIEFCKNLRLNADYIGISSAVAIYQAPQAAYDCFDKVSVLYEGEQIFFGKTTDAKQFFVDMGFHCPSQQTVPDFLTSLTSASERTPREGFEGKVPTTPQEFAARWKQSDKYQELLAQIAEFENKYPVHGKNYQEFLQSRRAQQSKRLRAKSPYTLSYGGQVELCLRRGFDRLRADPSLTLTQLFGNFIMALIIGSVFYNLPATTSSFYSRGALLFFAILMSAFGSALEILILYAQRGIVEKHSRYAFYHPSAEAVASALTDIPYKVINCIIFSLTLYFMTNLRREPGPYFFFMLISFTLTMVMSMLFRSIASLSRSLAQALAPAALLILGLVMYTGFAVNVANMRGWARWMNWLDPIAYGFESLMINEFHDREYECSAFIPMGPGYEGATGQQHVCSTAGAIAGSSVVNGDDYINLSYEYYHAHKWRNFGILIGFFLFFTAIYMTATEFITAKKSKGEILVFPRGKIPRALLAQSTHSHGSSDDVEGGKFAGGSKMKKQITGADRADAGIIQRQTAIFSWKDVVYDIKIKKEPRRILDHVDGWVKPGTLTALMGVSGAGKTTLLDVLATRVTMGVVTGEMLVDGRQRDVSFQRKTGYVQQQDLHLETSTVREALRFSAVLRQSNTISIKEKYEYVEEVLKLLEMESYADAVVGVPGTGLNVEQRKRLTIGVELVAKPALLLFLDEPTSGLDSQTSWNILLLLRKLTEHGQAILCTIHQPSAMLFEQFDRLLFLARGGKTVYFGEVGKGSHILIDYFEKNGAPKCPEGENPAEWMLAAIGAAPGSHSDVDWHQAWINSPERVEVRRELARIKETQGGKGEAALQNKDHEKSKSEVKAEYAEFASPLWKQFNVVLTRVWQQHWRTPSYIWSKAALCALSALFIGFSFFKSGTSQQGLQNQLFSVFMMFTIFGQLTQQIMPNFTTQRSLYEVRERPSKTYSWKIFILSNIVAEIPWAILMGAVIYFTWYYPIGYYRNAIPTGAVHLRGALMFLYIEMFLIFNATFAIMIVAGIATAETAGNIANLLFSMCLIFCGVLAPPSSLPGFWMFMYRVSPFTYLVDGMLSTAVAETSVVCSDIELLTLNPPSGESCGDYMSTYISNYGGYLVNENATTACEFCSMSSTNSFLAQFNIYYSNKWRDFGLLWAYVVFNIIAAVGIYWLARVPKNTGKEQASEPEGVQEKLVPAQSSEKKRESVSRGSESTAA</sequence>